<accession>B5XR94</accession>
<proteinExistence type="inferred from homology"/>
<organism>
    <name type="scientific">Klebsiella pneumoniae (strain 342)</name>
    <dbReference type="NCBI Taxonomy" id="507522"/>
    <lineage>
        <taxon>Bacteria</taxon>
        <taxon>Pseudomonadati</taxon>
        <taxon>Pseudomonadota</taxon>
        <taxon>Gammaproteobacteria</taxon>
        <taxon>Enterobacterales</taxon>
        <taxon>Enterobacteriaceae</taxon>
        <taxon>Klebsiella/Raoultella group</taxon>
        <taxon>Klebsiella</taxon>
        <taxon>Klebsiella pneumoniae complex</taxon>
    </lineage>
</organism>
<dbReference type="EMBL" id="CP000964">
    <property type="protein sequence ID" value="ACI10803.1"/>
    <property type="molecule type" value="Genomic_DNA"/>
</dbReference>
<dbReference type="SMR" id="B5XR94"/>
<dbReference type="KEGG" id="kpe:KPK_2891"/>
<dbReference type="HOGENOM" id="CLU_133067_0_4_6"/>
<dbReference type="PHI-base" id="PHI:8967"/>
<dbReference type="Proteomes" id="UP000001734">
    <property type="component" value="Chromosome"/>
</dbReference>
<dbReference type="GO" id="GO:0005886">
    <property type="term" value="C:plasma membrane"/>
    <property type="evidence" value="ECO:0007669"/>
    <property type="project" value="UniProtKB-SubCell"/>
</dbReference>
<dbReference type="GO" id="GO:0015199">
    <property type="term" value="F:amino-acid betaine transmembrane transporter activity"/>
    <property type="evidence" value="ECO:0007669"/>
    <property type="project" value="TreeGrafter"/>
</dbReference>
<dbReference type="GO" id="GO:0015297">
    <property type="term" value="F:antiporter activity"/>
    <property type="evidence" value="ECO:0007669"/>
    <property type="project" value="TreeGrafter"/>
</dbReference>
<dbReference type="GO" id="GO:0015220">
    <property type="term" value="F:choline transmembrane transporter activity"/>
    <property type="evidence" value="ECO:0007669"/>
    <property type="project" value="TreeGrafter"/>
</dbReference>
<dbReference type="GO" id="GO:0015606">
    <property type="term" value="F:spermidine transmembrane transporter activity"/>
    <property type="evidence" value="ECO:0007669"/>
    <property type="project" value="UniProtKB-UniRule"/>
</dbReference>
<dbReference type="GO" id="GO:0031460">
    <property type="term" value="P:glycine betaine transport"/>
    <property type="evidence" value="ECO:0007669"/>
    <property type="project" value="TreeGrafter"/>
</dbReference>
<dbReference type="FunFam" id="1.10.3730.20:FF:000001">
    <property type="entry name" value="Quaternary ammonium compound resistance transporter SugE"/>
    <property type="match status" value="1"/>
</dbReference>
<dbReference type="Gene3D" id="1.10.3730.20">
    <property type="match status" value="1"/>
</dbReference>
<dbReference type="HAMAP" id="MF_01597">
    <property type="entry name" value="MdtI"/>
    <property type="match status" value="1"/>
</dbReference>
<dbReference type="InterPro" id="IPR000390">
    <property type="entry name" value="Small_drug/metabolite_transptr"/>
</dbReference>
<dbReference type="InterPro" id="IPR045324">
    <property type="entry name" value="Small_multidrug_res"/>
</dbReference>
<dbReference type="InterPro" id="IPR023737">
    <property type="entry name" value="Spermidine_export_MdtI"/>
</dbReference>
<dbReference type="NCBIfam" id="NF007934">
    <property type="entry name" value="PRK10650.1"/>
    <property type="match status" value="1"/>
</dbReference>
<dbReference type="PANTHER" id="PTHR30561">
    <property type="entry name" value="SMR FAMILY PROTON-DEPENDENT DRUG EFFLUX TRANSPORTER SUGE"/>
    <property type="match status" value="1"/>
</dbReference>
<dbReference type="PANTHER" id="PTHR30561:SF6">
    <property type="entry name" value="SPERMIDINE EXPORT PROTEIN MDTI"/>
    <property type="match status" value="1"/>
</dbReference>
<dbReference type="Pfam" id="PF00893">
    <property type="entry name" value="Multi_Drug_Res"/>
    <property type="match status" value="1"/>
</dbReference>
<dbReference type="SUPFAM" id="SSF103481">
    <property type="entry name" value="Multidrug resistance efflux transporter EmrE"/>
    <property type="match status" value="1"/>
</dbReference>
<feature type="chain" id="PRO_1000197318" description="Spermidine export protein MdtI">
    <location>
        <begin position="1"/>
        <end position="109"/>
    </location>
</feature>
<feature type="transmembrane region" description="Helical" evidence="1">
    <location>
        <begin position="6"/>
        <end position="26"/>
    </location>
</feature>
<feature type="transmembrane region" description="Helical" evidence="1">
    <location>
        <begin position="36"/>
        <end position="56"/>
    </location>
</feature>
<feature type="transmembrane region" description="Helical" evidence="1">
    <location>
        <begin position="64"/>
        <end position="84"/>
    </location>
</feature>
<feature type="transmembrane region" description="Helical" evidence="1">
    <location>
        <begin position="88"/>
        <end position="108"/>
    </location>
</feature>
<reference key="1">
    <citation type="journal article" date="2008" name="PLoS Genet.">
        <title>Complete genome sequence of the N2-fixing broad host range endophyte Klebsiella pneumoniae 342 and virulence predictions verified in mice.</title>
        <authorList>
            <person name="Fouts D.E."/>
            <person name="Tyler H.L."/>
            <person name="DeBoy R.T."/>
            <person name="Daugherty S."/>
            <person name="Ren Q."/>
            <person name="Badger J.H."/>
            <person name="Durkin A.S."/>
            <person name="Huot H."/>
            <person name="Shrivastava S."/>
            <person name="Kothari S."/>
            <person name="Dodson R.J."/>
            <person name="Mohamoud Y."/>
            <person name="Khouri H."/>
            <person name="Roesch L.F.W."/>
            <person name="Krogfelt K.A."/>
            <person name="Struve C."/>
            <person name="Triplett E.W."/>
            <person name="Methe B.A."/>
        </authorList>
    </citation>
    <scope>NUCLEOTIDE SEQUENCE [LARGE SCALE GENOMIC DNA]</scope>
    <source>
        <strain>342</strain>
    </source>
</reference>
<comment type="function">
    <text evidence="1">Catalyzes the excretion of spermidine.</text>
</comment>
<comment type="subunit">
    <text evidence="1">Forms a complex with MdtJ.</text>
</comment>
<comment type="subcellular location">
    <subcellularLocation>
        <location evidence="1">Cell inner membrane</location>
        <topology evidence="1">Multi-pass membrane protein</topology>
    </subcellularLocation>
</comment>
<comment type="similarity">
    <text evidence="1">Belongs to the drug/metabolite transporter (DMT) superfamily. Small multidrug resistance (SMR) (TC 2.A.7.1) family. MdtI subfamily.</text>
</comment>
<protein>
    <recommendedName>
        <fullName evidence="1">Spermidine export protein MdtI</fullName>
    </recommendedName>
</protein>
<name>MDTI_KLEP3</name>
<gene>
    <name evidence="1" type="primary">mdtI</name>
    <name type="ordered locus">KPK_2891</name>
</gene>
<evidence type="ECO:0000255" key="1">
    <source>
        <dbReference type="HAMAP-Rule" id="MF_01597"/>
    </source>
</evidence>
<sequence length="109" mass="11663">MQQFEWIHAAWLAVAIVLEIIANVFLKFSDGFRRKVYGILSLAAVLGAFSALSQAVKGIDLSVAYALWGGFGIAATIAAGWVLFGQRLNNKGWAGLILLVAGMVLIKLA</sequence>
<keyword id="KW-0997">Cell inner membrane</keyword>
<keyword id="KW-1003">Cell membrane</keyword>
<keyword id="KW-0472">Membrane</keyword>
<keyword id="KW-0812">Transmembrane</keyword>
<keyword id="KW-1133">Transmembrane helix</keyword>
<keyword id="KW-0813">Transport</keyword>